<keyword id="KW-0072">Autophagy</keyword>
<keyword id="KW-0175">Coiled coil</keyword>
<keyword id="KW-0963">Cytoplasm</keyword>
<keyword id="KW-0968">Cytoplasmic vesicle</keyword>
<keyword id="KW-0206">Cytoskeleton</keyword>
<keyword id="KW-0472">Membrane</keyword>
<keyword id="KW-0479">Metal-binding</keyword>
<keyword id="KW-0597">Phosphoprotein</keyword>
<keyword id="KW-1185">Reference proteome</keyword>
<keyword id="KW-0862">Zinc</keyword>
<keyword id="KW-0863">Zinc-finger</keyword>
<accession>Q4R914</accession>
<feature type="chain" id="PRO_0000312338" description="Calcium-binding and coiled-coil domain-containing protein 2">
    <location>
        <begin position="1"/>
        <end position="398"/>
    </location>
</feature>
<feature type="zinc finger region" description="UBZ1-type" evidence="3">
    <location>
        <begin position="371"/>
        <end position="396"/>
    </location>
</feature>
<feature type="region of interest" description="Disordered" evidence="4">
    <location>
        <begin position="314"/>
        <end position="341"/>
    </location>
</feature>
<feature type="region of interest" description="Interaction with LGALS8" evidence="1">
    <location>
        <begin position="323"/>
        <end position="333"/>
    </location>
</feature>
<feature type="region of interest" description="Interaction with MYO6" evidence="1">
    <location>
        <begin position="347"/>
        <end position="398"/>
    </location>
</feature>
<feature type="coiled-coil region" evidence="2">
    <location>
        <begin position="137"/>
        <end position="301"/>
    </location>
</feature>
<feature type="short sequence motif" description="CLIR" evidence="1">
    <location>
        <begin position="133"/>
        <end position="136"/>
    </location>
</feature>
<feature type="short sequence motif" description="LIR-like" evidence="1">
    <location>
        <begin position="203"/>
        <end position="206"/>
    </location>
</feature>
<feature type="binding site" evidence="3">
    <location>
        <position position="374"/>
    </location>
    <ligand>
        <name>Zn(2+)</name>
        <dbReference type="ChEBI" id="CHEBI:29105"/>
    </ligand>
</feature>
<feature type="binding site" evidence="3">
    <location>
        <position position="377"/>
    </location>
    <ligand>
        <name>Zn(2+)</name>
        <dbReference type="ChEBI" id="CHEBI:29105"/>
    </ligand>
</feature>
<feature type="binding site" evidence="3">
    <location>
        <position position="392"/>
    </location>
    <ligand>
        <name>Zn(2+)</name>
        <dbReference type="ChEBI" id="CHEBI:29105"/>
    </ligand>
</feature>
<feature type="binding site" evidence="3">
    <location>
        <position position="396"/>
    </location>
    <ligand>
        <name>Zn(2+)</name>
        <dbReference type="ChEBI" id="CHEBI:29105"/>
    </ligand>
</feature>
<feature type="modified residue" description="Phosphoserine" evidence="1">
    <location>
        <position position="397"/>
    </location>
</feature>
<proteinExistence type="evidence at transcript level"/>
<protein>
    <recommendedName>
        <fullName evidence="1">Calcium-binding and coiled-coil domain-containing protein 2</fullName>
    </recommendedName>
    <alternativeName>
        <fullName evidence="1">Antigen nuclear dot 52 kDa protein</fullName>
    </alternativeName>
    <alternativeName>
        <fullName evidence="1">Nuclear domain 10 protein NDP52</fullName>
        <shortName evidence="1">Nuclear domain 10 protein 52</shortName>
    </alternativeName>
    <alternativeName>
        <fullName evidence="1">Nuclear dot protein 52</fullName>
    </alternativeName>
</protein>
<gene>
    <name evidence="1" type="primary">CALCOCO2</name>
    <name evidence="1" type="synonym">NDP52</name>
    <name type="ORF">QtsA-10956</name>
</gene>
<sequence length="398" mass="46589">MEKTIEDPPTSAVLLDHCHFSQVIFNSVEKFYIPGGDVTCRYTFTQNFIPRQKDWIGIFRVGWKTVREYYTFMWVTLPIDLNNKSAKQQEVQFKAYYLPKDDEYYQFCYVDQDGVVRGASIPFQFRPENEEDILVVTTQGEVEEIEQHNKELCKENQELKDSCVSLQKQNSDMQAELQKKQEELETLQSINKKLELKVKEQKDYWETEQLEHLKKENGHLFLSLTEQRKDQKKLEQTVEEMKQNETTAMKKQQELMDENFDLSRRLSEKKMIYNALQREKERLEGENDLLKRENSRLLSYMGLDFNSLPYQVPTSDEGGAGQNPGLVYGNPYSGIQESSSPSQLSIKKCPICKADDICDHTLEQQQMQALCLNCPICDKIFPATEKQIFEDHVFCHSL</sequence>
<evidence type="ECO:0000250" key="1">
    <source>
        <dbReference type="UniProtKB" id="Q13137"/>
    </source>
</evidence>
<evidence type="ECO:0000255" key="2"/>
<evidence type="ECO:0000255" key="3">
    <source>
        <dbReference type="PROSITE-ProRule" id="PRU01253"/>
    </source>
</evidence>
<evidence type="ECO:0000256" key="4">
    <source>
        <dbReference type="SAM" id="MobiDB-lite"/>
    </source>
</evidence>
<evidence type="ECO:0000305" key="5"/>
<name>CACO2_MACFA</name>
<organism>
    <name type="scientific">Macaca fascicularis</name>
    <name type="common">Crab-eating macaque</name>
    <name type="synonym">Cynomolgus monkey</name>
    <dbReference type="NCBI Taxonomy" id="9541"/>
    <lineage>
        <taxon>Eukaryota</taxon>
        <taxon>Metazoa</taxon>
        <taxon>Chordata</taxon>
        <taxon>Craniata</taxon>
        <taxon>Vertebrata</taxon>
        <taxon>Euteleostomi</taxon>
        <taxon>Mammalia</taxon>
        <taxon>Eutheria</taxon>
        <taxon>Euarchontoglires</taxon>
        <taxon>Primates</taxon>
        <taxon>Haplorrhini</taxon>
        <taxon>Catarrhini</taxon>
        <taxon>Cercopithecidae</taxon>
        <taxon>Cercopithecinae</taxon>
        <taxon>Macaca</taxon>
    </lineage>
</organism>
<comment type="function">
    <text evidence="1">Xenophagy-specific receptor required for autophagy-mediated intracellular bacteria degradation (By similarity). Acts as an effector protein of galectin-sensed membrane damage that restricts the proliferation of infecting pathogens upon entry into the cytosol by targeting LGALS8-associated bacteria for autophagy (By similarity). Initially orchestrates bacteria targeting to autophagosomes and subsequently ensures pathogen degradation by regulating pathogen-containing autophagosome maturation (By similarity). Bacteria targeting to autophagosomes relies on its interaction with MAP1LC3A, MAP1LC3B and/or GABARAPL2, whereas regulation of pathogen-containing autophagosome maturation requires the interaction with MAP3LC3C (By similarity). May play a role in ruffle formation and actin cytoskeleton organization and seems to negatively regulate constitutive secretion (By similarity).</text>
</comment>
<comment type="subunit">
    <text evidence="1">Dimer. Part of a complex consisting of CALCOCO2, TAX1BP1 and MYO6. Interacts with MYO6 (By similarity). Interacts with GEMIN4. Interacts with ATG8 family members MAP1LC3A, MAP1LC3B, GABARAP, GABARAPL1 and GABARAPL2. Interacts with ATG8 family member MAP1LC3C. Interacts with LGALS8. Interacts with TOM1; the interaction is indirect and is mediated by MYO6, which acts as a bridge between TOM1 and CALCOCO2 (By similarity). Interacts with AZI2 (By similarity).</text>
</comment>
<comment type="subcellular location">
    <subcellularLocation>
        <location evidence="1">Cytoplasm</location>
        <location evidence="1">Perinuclear region</location>
    </subcellularLocation>
    <subcellularLocation>
        <location evidence="1">Cytoplasm</location>
        <location evidence="1">Cytoskeleton</location>
    </subcellularLocation>
    <subcellularLocation>
        <location evidence="1">Cytoplasmic vesicle</location>
        <location evidence="1">Autophagosome membrane</location>
        <topology evidence="5">Peripheral membrane protein</topology>
    </subcellularLocation>
</comment>
<comment type="domain">
    <text evidence="1">The MYO6-binding domain is required for autophagy-mediated degradation of infecting bacteria such as Salmonella typhimurium, but not for bacteria targeting to autophagosomes.</text>
</comment>
<comment type="domain">
    <text evidence="1">The LGALS8-binding domain is essential for the recruitment to cytosol-exposed infecting bacteria.</text>
</comment>
<comment type="domain">
    <text evidence="1">The CLIR (LC3C-interacting region) motif is required for interaction with MAP1LC3C, but dispensable for CALCOCO2-mediated autophagosome maturation.</text>
</comment>
<comment type="domain">
    <text evidence="1">The LIR-like motif is required for interaction with MAP1LC3A, MAP1LC3B and GABARAPL2, as well as for CALCOCO2-mediated autophagosome maturation.</text>
</comment>
<comment type="similarity">
    <text evidence="5">Belongs to the CALCOCO family.</text>
</comment>
<reference key="1">
    <citation type="submission" date="2005-06" db="EMBL/GenBank/DDBJ databases">
        <title>DNA sequences of macaque genes expressed in brain or testis and its evolutionary implications.</title>
        <authorList>
            <consortium name="International consortium for macaque cDNA sequencing and analysis"/>
        </authorList>
    </citation>
    <scope>NUCLEOTIDE SEQUENCE [LARGE SCALE MRNA]</scope>
    <source>
        <tissue>Testis</tissue>
    </source>
</reference>
<dbReference type="EMBL" id="AB168283">
    <property type="protein sequence ID" value="BAE00407.1"/>
    <property type="molecule type" value="mRNA"/>
</dbReference>
<dbReference type="SMR" id="Q4R914"/>
<dbReference type="STRING" id="9541.ENSMFAP00000009296"/>
<dbReference type="Ensembl" id="ENSMFAT00000087204.1">
    <property type="protein sequence ID" value="ENSMFAP00000050859.1"/>
    <property type="gene ID" value="ENSMFAG00000000840.2"/>
</dbReference>
<dbReference type="GeneTree" id="ENSGT00950000183025"/>
<dbReference type="Proteomes" id="UP000233100">
    <property type="component" value="Chromosome 16"/>
</dbReference>
<dbReference type="Bgee" id="ENSMFAG00000000840">
    <property type="expression patterns" value="Expressed in heart and 13 other cell types or tissues"/>
</dbReference>
<dbReference type="GO" id="GO:0005776">
    <property type="term" value="C:autophagosome"/>
    <property type="evidence" value="ECO:0000250"/>
    <property type="project" value="GO_Central"/>
</dbReference>
<dbReference type="GO" id="GO:0000421">
    <property type="term" value="C:autophagosome membrane"/>
    <property type="evidence" value="ECO:0007669"/>
    <property type="project" value="UniProtKB-SubCell"/>
</dbReference>
<dbReference type="GO" id="GO:0031410">
    <property type="term" value="C:cytoplasmic vesicle"/>
    <property type="evidence" value="ECO:0007669"/>
    <property type="project" value="UniProtKB-KW"/>
</dbReference>
<dbReference type="GO" id="GO:0005856">
    <property type="term" value="C:cytoskeleton"/>
    <property type="evidence" value="ECO:0007669"/>
    <property type="project" value="UniProtKB-SubCell"/>
</dbReference>
<dbReference type="GO" id="GO:0048471">
    <property type="term" value="C:perinuclear region of cytoplasm"/>
    <property type="evidence" value="ECO:0007669"/>
    <property type="project" value="UniProtKB-SubCell"/>
</dbReference>
<dbReference type="GO" id="GO:0016605">
    <property type="term" value="C:PML body"/>
    <property type="evidence" value="ECO:0007669"/>
    <property type="project" value="TreeGrafter"/>
</dbReference>
<dbReference type="GO" id="GO:0008270">
    <property type="term" value="F:zinc ion binding"/>
    <property type="evidence" value="ECO:0007669"/>
    <property type="project" value="UniProtKB-KW"/>
</dbReference>
<dbReference type="GO" id="GO:1901098">
    <property type="term" value="P:positive regulation of autophagosome maturation"/>
    <property type="evidence" value="ECO:0000250"/>
    <property type="project" value="GO_Central"/>
</dbReference>
<dbReference type="GO" id="GO:0098792">
    <property type="term" value="P:xenophagy"/>
    <property type="evidence" value="ECO:0000250"/>
    <property type="project" value="GO_Central"/>
</dbReference>
<dbReference type="CDD" id="cd21968">
    <property type="entry name" value="Zn-C2H2_CALCOCO2"/>
    <property type="match status" value="1"/>
</dbReference>
<dbReference type="FunFam" id="2.60.40.2840:FF:000002">
    <property type="entry name" value="Tax1-binding protein 1 isoform 2"/>
    <property type="match status" value="1"/>
</dbReference>
<dbReference type="Gene3D" id="2.60.40.2840">
    <property type="match status" value="1"/>
</dbReference>
<dbReference type="Gene3D" id="6.20.250.40">
    <property type="match status" value="1"/>
</dbReference>
<dbReference type="InterPro" id="IPR041641">
    <property type="entry name" value="CALCOCO1/2_Zn_UBZ1"/>
</dbReference>
<dbReference type="InterPro" id="IPR041611">
    <property type="entry name" value="SKICH"/>
</dbReference>
<dbReference type="InterPro" id="IPR051002">
    <property type="entry name" value="UBA_autophagy_assoc_protein"/>
</dbReference>
<dbReference type="PANTHER" id="PTHR31915:SF4">
    <property type="entry name" value="CALCIUM-BINDING AND COILED-COIL DOMAIN-CONTAINING PROTEIN 2"/>
    <property type="match status" value="1"/>
</dbReference>
<dbReference type="PANTHER" id="PTHR31915">
    <property type="entry name" value="SKICH DOMAIN-CONTAINING PROTEIN"/>
    <property type="match status" value="1"/>
</dbReference>
<dbReference type="Pfam" id="PF17751">
    <property type="entry name" value="SKICH"/>
    <property type="match status" value="1"/>
</dbReference>
<dbReference type="PROSITE" id="PS51905">
    <property type="entry name" value="ZF_UBZ1"/>
    <property type="match status" value="1"/>
</dbReference>